<dbReference type="EC" id="3.1.15.-" evidence="1"/>
<dbReference type="EMBL" id="CP000746">
    <property type="protein sequence ID" value="ABR74360.1"/>
    <property type="molecule type" value="Genomic_DNA"/>
</dbReference>
<dbReference type="RefSeq" id="WP_012072737.1">
    <property type="nucleotide sequence ID" value="NC_009655.1"/>
</dbReference>
<dbReference type="SMR" id="A6VN13"/>
<dbReference type="STRING" id="339671.Asuc_0992"/>
<dbReference type="KEGG" id="asu:Asuc_0992"/>
<dbReference type="eggNOG" id="COG1949">
    <property type="taxonomic scope" value="Bacteria"/>
</dbReference>
<dbReference type="HOGENOM" id="CLU_064761_2_0_6"/>
<dbReference type="OrthoDB" id="9801329at2"/>
<dbReference type="Proteomes" id="UP000001114">
    <property type="component" value="Chromosome"/>
</dbReference>
<dbReference type="GO" id="GO:0005737">
    <property type="term" value="C:cytoplasm"/>
    <property type="evidence" value="ECO:0007669"/>
    <property type="project" value="UniProtKB-SubCell"/>
</dbReference>
<dbReference type="GO" id="GO:0000175">
    <property type="term" value="F:3'-5'-RNA exonuclease activity"/>
    <property type="evidence" value="ECO:0007669"/>
    <property type="project" value="InterPro"/>
</dbReference>
<dbReference type="GO" id="GO:0003676">
    <property type="term" value="F:nucleic acid binding"/>
    <property type="evidence" value="ECO:0007669"/>
    <property type="project" value="InterPro"/>
</dbReference>
<dbReference type="GO" id="GO:0006259">
    <property type="term" value="P:DNA metabolic process"/>
    <property type="evidence" value="ECO:0007669"/>
    <property type="project" value="UniProtKB-ARBA"/>
</dbReference>
<dbReference type="CDD" id="cd06135">
    <property type="entry name" value="Orn"/>
    <property type="match status" value="1"/>
</dbReference>
<dbReference type="FunFam" id="3.30.420.10:FF:000003">
    <property type="entry name" value="Oligoribonuclease"/>
    <property type="match status" value="1"/>
</dbReference>
<dbReference type="Gene3D" id="3.30.420.10">
    <property type="entry name" value="Ribonuclease H-like superfamily/Ribonuclease H"/>
    <property type="match status" value="1"/>
</dbReference>
<dbReference type="HAMAP" id="MF_00045">
    <property type="entry name" value="Oligoribonuclease"/>
    <property type="match status" value="1"/>
</dbReference>
<dbReference type="InterPro" id="IPR013520">
    <property type="entry name" value="Exonuclease_RNaseT/DNA_pol3"/>
</dbReference>
<dbReference type="InterPro" id="IPR022894">
    <property type="entry name" value="Oligoribonuclease"/>
</dbReference>
<dbReference type="InterPro" id="IPR012337">
    <property type="entry name" value="RNaseH-like_sf"/>
</dbReference>
<dbReference type="InterPro" id="IPR036397">
    <property type="entry name" value="RNaseH_sf"/>
</dbReference>
<dbReference type="NCBIfam" id="NF003765">
    <property type="entry name" value="PRK05359.1"/>
    <property type="match status" value="1"/>
</dbReference>
<dbReference type="PANTHER" id="PTHR11046">
    <property type="entry name" value="OLIGORIBONUCLEASE, MITOCHONDRIAL"/>
    <property type="match status" value="1"/>
</dbReference>
<dbReference type="PANTHER" id="PTHR11046:SF0">
    <property type="entry name" value="OLIGORIBONUCLEASE, MITOCHONDRIAL"/>
    <property type="match status" value="1"/>
</dbReference>
<dbReference type="Pfam" id="PF00929">
    <property type="entry name" value="RNase_T"/>
    <property type="match status" value="1"/>
</dbReference>
<dbReference type="SMART" id="SM00479">
    <property type="entry name" value="EXOIII"/>
    <property type="match status" value="1"/>
</dbReference>
<dbReference type="SUPFAM" id="SSF53098">
    <property type="entry name" value="Ribonuclease H-like"/>
    <property type="match status" value="1"/>
</dbReference>
<proteinExistence type="inferred from homology"/>
<protein>
    <recommendedName>
        <fullName evidence="1">Oligoribonuclease</fullName>
        <ecNumber evidence="1">3.1.15.-</ecNumber>
    </recommendedName>
</protein>
<organism>
    <name type="scientific">Actinobacillus succinogenes (strain ATCC 55618 / DSM 22257 / CCUG 43843 / 130Z)</name>
    <dbReference type="NCBI Taxonomy" id="339671"/>
    <lineage>
        <taxon>Bacteria</taxon>
        <taxon>Pseudomonadati</taxon>
        <taxon>Pseudomonadota</taxon>
        <taxon>Gammaproteobacteria</taxon>
        <taxon>Pasteurellales</taxon>
        <taxon>Pasteurellaceae</taxon>
        <taxon>Actinobacillus</taxon>
    </lineage>
</organism>
<feature type="chain" id="PRO_1000071089" description="Oligoribonuclease">
    <location>
        <begin position="1"/>
        <end position="182"/>
    </location>
</feature>
<feature type="domain" description="Exonuclease" evidence="1">
    <location>
        <begin position="8"/>
        <end position="171"/>
    </location>
</feature>
<feature type="active site" evidence="1">
    <location>
        <position position="129"/>
    </location>
</feature>
<sequence>MAQDKENLIWIDLEMTGLDPEQERIIEIATIVTDKNLNILAEGPVLAVHQPNQLLDKMSDWCIKTHTANGLVERVKASKLTERAAELQTIDFLKLWVPKGASPICGNSVAQDKRFLFKYMPDLADYFHYRHLDVSTLKELARRWKPEISDGFQKANTHLALDDIRESIKELAYYREHFIKLD</sequence>
<reference key="1">
    <citation type="journal article" date="2010" name="BMC Genomics">
        <title>A genomic perspective on the potential of Actinobacillus succinogenes for industrial succinate production.</title>
        <authorList>
            <person name="McKinlay J.B."/>
            <person name="Laivenieks M."/>
            <person name="Schindler B.D."/>
            <person name="McKinlay A.A."/>
            <person name="Siddaramappa S."/>
            <person name="Challacombe J.F."/>
            <person name="Lowry S.R."/>
            <person name="Clum A."/>
            <person name="Lapidus A.L."/>
            <person name="Burkhart K.B."/>
            <person name="Harkins V."/>
            <person name="Vieille C."/>
        </authorList>
    </citation>
    <scope>NUCLEOTIDE SEQUENCE [LARGE SCALE GENOMIC DNA]</scope>
    <source>
        <strain>ATCC 55618 / DSM 22257 / CCUG 43843 / 130Z</strain>
    </source>
</reference>
<evidence type="ECO:0000255" key="1">
    <source>
        <dbReference type="HAMAP-Rule" id="MF_00045"/>
    </source>
</evidence>
<comment type="function">
    <text evidence="1">3'-to-5' exoribonuclease specific for small oligoribonucleotides.</text>
</comment>
<comment type="subcellular location">
    <subcellularLocation>
        <location evidence="1">Cytoplasm</location>
    </subcellularLocation>
</comment>
<comment type="similarity">
    <text evidence="1">Belongs to the oligoribonuclease family.</text>
</comment>
<gene>
    <name evidence="1" type="primary">orn</name>
    <name type="ordered locus">Asuc_0992</name>
</gene>
<accession>A6VN13</accession>
<name>ORN_ACTSZ</name>
<keyword id="KW-0963">Cytoplasm</keyword>
<keyword id="KW-0269">Exonuclease</keyword>
<keyword id="KW-0378">Hydrolase</keyword>
<keyword id="KW-0540">Nuclease</keyword>
<keyword id="KW-1185">Reference proteome</keyword>